<proteinExistence type="inferred from homology"/>
<protein>
    <recommendedName>
        <fullName evidence="1">Formamidase</fullName>
        <ecNumber evidence="1">3.5.1.49</ecNumber>
    </recommendedName>
    <alternativeName>
        <fullName evidence="1">Formamide amidohydrolase</fullName>
    </alternativeName>
</protein>
<keyword id="KW-0378">Hydrolase</keyword>
<keyword id="KW-1185">Reference proteome</keyword>
<comment type="function">
    <text evidence="1">Is an aliphatic amidase with a restricted substrate specificity, as it only hydrolyzes formamide.</text>
</comment>
<comment type="catalytic activity">
    <reaction evidence="1">
        <text>formamide + H2O = formate + NH4(+)</text>
        <dbReference type="Rhea" id="RHEA:21948"/>
        <dbReference type="ChEBI" id="CHEBI:15377"/>
        <dbReference type="ChEBI" id="CHEBI:15740"/>
        <dbReference type="ChEBI" id="CHEBI:16397"/>
        <dbReference type="ChEBI" id="CHEBI:28938"/>
        <dbReference type="EC" id="3.5.1.49"/>
    </reaction>
</comment>
<comment type="similarity">
    <text evidence="1">Belongs to the carbon-nitrogen hydrolase superfamily. Aliphatic amidase family.</text>
</comment>
<dbReference type="EC" id="3.5.1.49" evidence="1"/>
<dbReference type="EMBL" id="CP000634">
    <property type="protein sequence ID" value="ACM38742.1"/>
    <property type="molecule type" value="Genomic_DNA"/>
</dbReference>
<dbReference type="RefSeq" id="WP_012653984.1">
    <property type="nucleotide sequence ID" value="NC_011988.1"/>
</dbReference>
<dbReference type="SMR" id="B9K1J4"/>
<dbReference type="STRING" id="311402.Avi_5655"/>
<dbReference type="KEGG" id="avi:Avi_5655"/>
<dbReference type="eggNOG" id="COG0388">
    <property type="taxonomic scope" value="Bacteria"/>
</dbReference>
<dbReference type="HOGENOM" id="CLU_071797_0_0_5"/>
<dbReference type="Proteomes" id="UP000001596">
    <property type="component" value="Chromosome 2"/>
</dbReference>
<dbReference type="GO" id="GO:0004328">
    <property type="term" value="F:formamidase activity"/>
    <property type="evidence" value="ECO:0007669"/>
    <property type="project" value="UniProtKB-UniRule"/>
</dbReference>
<dbReference type="GO" id="GO:0050126">
    <property type="term" value="F:N-carbamoylputrescine amidase activity"/>
    <property type="evidence" value="ECO:0007669"/>
    <property type="project" value="TreeGrafter"/>
</dbReference>
<dbReference type="GO" id="GO:0033388">
    <property type="term" value="P:putrescine biosynthetic process from arginine"/>
    <property type="evidence" value="ECO:0007669"/>
    <property type="project" value="TreeGrafter"/>
</dbReference>
<dbReference type="CDD" id="cd07565">
    <property type="entry name" value="aliphatic_amidase"/>
    <property type="match status" value="1"/>
</dbReference>
<dbReference type="Gene3D" id="3.60.110.10">
    <property type="entry name" value="Carbon-nitrogen hydrolase"/>
    <property type="match status" value="1"/>
</dbReference>
<dbReference type="HAMAP" id="MF_01243">
    <property type="entry name" value="Formamidase"/>
    <property type="match status" value="1"/>
</dbReference>
<dbReference type="InterPro" id="IPR050345">
    <property type="entry name" value="Aliph_Amidase/BUP"/>
</dbReference>
<dbReference type="InterPro" id="IPR003010">
    <property type="entry name" value="C-N_Hydrolase"/>
</dbReference>
<dbReference type="InterPro" id="IPR036526">
    <property type="entry name" value="C-N_Hydrolase_sf"/>
</dbReference>
<dbReference type="InterPro" id="IPR022843">
    <property type="entry name" value="Formamidase"/>
</dbReference>
<dbReference type="NCBIfam" id="NF009803">
    <property type="entry name" value="PRK13287.1"/>
    <property type="match status" value="1"/>
</dbReference>
<dbReference type="PANTHER" id="PTHR43674:SF15">
    <property type="entry name" value="FORMAMIDASE"/>
    <property type="match status" value="1"/>
</dbReference>
<dbReference type="PANTHER" id="PTHR43674">
    <property type="entry name" value="NITRILASE C965.09-RELATED"/>
    <property type="match status" value="1"/>
</dbReference>
<dbReference type="Pfam" id="PF00795">
    <property type="entry name" value="CN_hydrolase"/>
    <property type="match status" value="1"/>
</dbReference>
<dbReference type="SUPFAM" id="SSF56317">
    <property type="entry name" value="Carbon-nitrogen hydrolase"/>
    <property type="match status" value="1"/>
</dbReference>
<dbReference type="PROSITE" id="PS50263">
    <property type="entry name" value="CN_HYDROLASE"/>
    <property type="match status" value="1"/>
</dbReference>
<sequence length="338" mass="36924">MNGLGGLNKSEHGVGIGLVQLQLPVTVTPQDLARQTQVIVDLVAKARRNQPGMDLVVFPEYALHGLSMDINPDIMCRMDGPEVAAFKAACKQNRIWGCFSIMEYNPGGMPYNSGIIIDDTGALKLYYRKMHPWVPVEPWEPGDLGIPVIDGPKGAKLALIICHDGMFPEMARECAYKGAEIMIRTAGYTAPIRESWRFTNQSNAFCNLMVTANVCMCGSDGTFDSMGEGMICNFDGSIIAHGTSGRVNEIITAEVRPDLVREARLGWGVENNIYQLGHRGYVAVAGGAQDAPYTYMHDLAAGRYRLPWEVEVKITDGTACGFEKPTRLYGKPAKSAAE</sequence>
<reference key="1">
    <citation type="journal article" date="2009" name="J. Bacteriol.">
        <title>Genome sequences of three Agrobacterium biovars help elucidate the evolution of multichromosome genomes in bacteria.</title>
        <authorList>
            <person name="Slater S.C."/>
            <person name="Goldman B.S."/>
            <person name="Goodner B."/>
            <person name="Setubal J.C."/>
            <person name="Farrand S.K."/>
            <person name="Nester E.W."/>
            <person name="Burr T.J."/>
            <person name="Banta L."/>
            <person name="Dickerman A.W."/>
            <person name="Paulsen I."/>
            <person name="Otten L."/>
            <person name="Suen G."/>
            <person name="Welch R."/>
            <person name="Almeida N.F."/>
            <person name="Arnold F."/>
            <person name="Burton O.T."/>
            <person name="Du Z."/>
            <person name="Ewing A."/>
            <person name="Godsy E."/>
            <person name="Heisel S."/>
            <person name="Houmiel K.L."/>
            <person name="Jhaveri J."/>
            <person name="Lu J."/>
            <person name="Miller N.M."/>
            <person name="Norton S."/>
            <person name="Chen Q."/>
            <person name="Phoolcharoen W."/>
            <person name="Ohlin V."/>
            <person name="Ondrusek D."/>
            <person name="Pride N."/>
            <person name="Stricklin S.L."/>
            <person name="Sun J."/>
            <person name="Wheeler C."/>
            <person name="Wilson L."/>
            <person name="Zhu H."/>
            <person name="Wood D.W."/>
        </authorList>
    </citation>
    <scope>NUCLEOTIDE SEQUENCE [LARGE SCALE GENOMIC DNA]</scope>
    <source>
        <strain>ATCC BAA-846 / DSM 112012 / S4</strain>
    </source>
</reference>
<feature type="chain" id="PRO_1000165035" description="Formamidase">
    <location>
        <begin position="1"/>
        <end position="338"/>
    </location>
</feature>
<feature type="domain" description="CN hydrolase" evidence="2">
    <location>
        <begin position="14"/>
        <end position="257"/>
    </location>
</feature>
<feature type="active site" description="Proton acceptor" evidence="1">
    <location>
        <position position="60"/>
    </location>
</feature>
<feature type="active site" description="Proton donor" evidence="1">
    <location>
        <position position="129"/>
    </location>
</feature>
<feature type="active site" description="Nucleophile" evidence="1">
    <location>
        <position position="162"/>
    </location>
</feature>
<evidence type="ECO:0000255" key="1">
    <source>
        <dbReference type="HAMAP-Rule" id="MF_01243"/>
    </source>
</evidence>
<evidence type="ECO:0000255" key="2">
    <source>
        <dbReference type="PROSITE-ProRule" id="PRU00054"/>
    </source>
</evidence>
<organism>
    <name type="scientific">Allorhizobium ampelinum (strain ATCC BAA-846 / DSM 112012 / S4)</name>
    <name type="common">Agrobacterium vitis (strain S4)</name>
    <dbReference type="NCBI Taxonomy" id="311402"/>
    <lineage>
        <taxon>Bacteria</taxon>
        <taxon>Pseudomonadati</taxon>
        <taxon>Pseudomonadota</taxon>
        <taxon>Alphaproteobacteria</taxon>
        <taxon>Hyphomicrobiales</taxon>
        <taxon>Rhizobiaceae</taxon>
        <taxon>Rhizobium/Agrobacterium group</taxon>
        <taxon>Allorhizobium</taxon>
        <taxon>Allorhizobium ampelinum</taxon>
    </lineage>
</organism>
<gene>
    <name evidence="1" type="primary">amiF</name>
    <name type="ordered locus">Avi_5655</name>
</gene>
<accession>B9K1J4</accession>
<name>AMIF_ALLAM</name>